<comment type="subcellular location">
    <subcellularLocation>
        <location evidence="1">Cell inner membrane</location>
        <topology evidence="1">Multi-pass membrane protein</topology>
    </subcellularLocation>
</comment>
<comment type="similarity">
    <text evidence="3">Belongs to the SpmB family.</text>
</comment>
<organism>
    <name type="scientific">Escherichia coli O157:H7</name>
    <dbReference type="NCBI Taxonomy" id="83334"/>
    <lineage>
        <taxon>Bacteria</taxon>
        <taxon>Pseudomonadati</taxon>
        <taxon>Pseudomonadota</taxon>
        <taxon>Gammaproteobacteria</taxon>
        <taxon>Enterobacterales</taxon>
        <taxon>Enterobacteriaceae</taxon>
        <taxon>Escherichia</taxon>
    </lineage>
</organism>
<gene>
    <name type="primary">yjiG</name>
    <name type="ordered locus">Z5928</name>
    <name type="ordered locus">ECs5287</name>
</gene>
<feature type="chain" id="PRO_0000201933" description="Inner membrane protein YjiG">
    <location>
        <begin position="1"/>
        <end position="153"/>
    </location>
</feature>
<feature type="topological domain" description="Periplasmic" evidence="2">
    <location>
        <begin position="1"/>
        <end position="31"/>
    </location>
</feature>
<feature type="transmembrane region" description="Helical" evidence="2">
    <location>
        <begin position="32"/>
        <end position="52"/>
    </location>
</feature>
<feature type="topological domain" description="Cytoplasmic" evidence="2">
    <location>
        <begin position="53"/>
        <end position="68"/>
    </location>
</feature>
<feature type="transmembrane region" description="Helical" evidence="2">
    <location>
        <begin position="69"/>
        <end position="89"/>
    </location>
</feature>
<feature type="transmembrane region" description="Helical" evidence="2">
    <location>
        <begin position="90"/>
        <end position="110"/>
    </location>
</feature>
<feature type="topological domain" description="Cytoplasmic" evidence="2">
    <location>
        <begin position="111"/>
        <end position="132"/>
    </location>
</feature>
<feature type="transmembrane region" description="Helical" evidence="2">
    <location>
        <begin position="133"/>
        <end position="153"/>
    </location>
</feature>
<reference key="1">
    <citation type="journal article" date="2001" name="Nature">
        <title>Genome sequence of enterohaemorrhagic Escherichia coli O157:H7.</title>
        <authorList>
            <person name="Perna N.T."/>
            <person name="Plunkett G. III"/>
            <person name="Burland V."/>
            <person name="Mau B."/>
            <person name="Glasner J.D."/>
            <person name="Rose D.J."/>
            <person name="Mayhew G.F."/>
            <person name="Evans P.S."/>
            <person name="Gregor J."/>
            <person name="Kirkpatrick H.A."/>
            <person name="Posfai G."/>
            <person name="Hackett J."/>
            <person name="Klink S."/>
            <person name="Boutin A."/>
            <person name="Shao Y."/>
            <person name="Miller L."/>
            <person name="Grotbeck E.J."/>
            <person name="Davis N.W."/>
            <person name="Lim A."/>
            <person name="Dimalanta E.T."/>
            <person name="Potamousis K."/>
            <person name="Apodaca J."/>
            <person name="Anantharaman T.S."/>
            <person name="Lin J."/>
            <person name="Yen G."/>
            <person name="Schwartz D.C."/>
            <person name="Welch R.A."/>
            <person name="Blattner F.R."/>
        </authorList>
    </citation>
    <scope>NUCLEOTIDE SEQUENCE [LARGE SCALE GENOMIC DNA]</scope>
    <source>
        <strain>O157:H7 / EDL933 / ATCC 700927 / EHEC</strain>
    </source>
</reference>
<reference key="2">
    <citation type="journal article" date="2001" name="DNA Res.">
        <title>Complete genome sequence of enterohemorrhagic Escherichia coli O157:H7 and genomic comparison with a laboratory strain K-12.</title>
        <authorList>
            <person name="Hayashi T."/>
            <person name="Makino K."/>
            <person name="Ohnishi M."/>
            <person name="Kurokawa K."/>
            <person name="Ishii K."/>
            <person name="Yokoyama K."/>
            <person name="Han C.-G."/>
            <person name="Ohtsubo E."/>
            <person name="Nakayama K."/>
            <person name="Murata T."/>
            <person name="Tanaka M."/>
            <person name="Tobe T."/>
            <person name="Iida T."/>
            <person name="Takami H."/>
            <person name="Honda T."/>
            <person name="Sasakawa C."/>
            <person name="Ogasawara N."/>
            <person name="Yasunaga T."/>
            <person name="Kuhara S."/>
            <person name="Shiba T."/>
            <person name="Hattori M."/>
            <person name="Shinagawa H."/>
        </authorList>
    </citation>
    <scope>NUCLEOTIDE SEQUENCE [LARGE SCALE GENOMIC DNA]</scope>
    <source>
        <strain>O157:H7 / Sakai / RIMD 0509952 / EHEC</strain>
    </source>
</reference>
<name>YJIG_ECO57</name>
<sequence length="153" mass="16193">MTTQVRKNVMDMFIDGARRGFTIATTNLLPNVVMAFVIIQALKITGLLDWVGHICEPVMALWGLPGEAATVLLAALMSMGGAVGVAASLATAGALTGHDVTVLLPAMYLMGNPVQNVGRCLGTAEVNAKYYPHIITVCVINALLSIWVMQLIV</sequence>
<accession>P0AEI0</accession>
<accession>P39378</accession>
<evidence type="ECO:0000250" key="1"/>
<evidence type="ECO:0000255" key="2"/>
<evidence type="ECO:0000305" key="3"/>
<protein>
    <recommendedName>
        <fullName>Inner membrane protein YjiG</fullName>
    </recommendedName>
</protein>
<dbReference type="EMBL" id="AE005174">
    <property type="protein sequence ID" value="AAG59512.1"/>
    <property type="molecule type" value="Genomic_DNA"/>
</dbReference>
<dbReference type="EMBL" id="BA000007">
    <property type="protein sequence ID" value="BAB38710.1"/>
    <property type="molecule type" value="Genomic_DNA"/>
</dbReference>
<dbReference type="PIR" id="D86131">
    <property type="entry name" value="D86131"/>
</dbReference>
<dbReference type="PIR" id="G91289">
    <property type="entry name" value="G91289"/>
</dbReference>
<dbReference type="RefSeq" id="NP_313314.1">
    <property type="nucleotide sequence ID" value="NC_002695.1"/>
</dbReference>
<dbReference type="RefSeq" id="WP_000211971.1">
    <property type="nucleotide sequence ID" value="NZ_VOAI01000002.1"/>
</dbReference>
<dbReference type="STRING" id="155864.Z5928"/>
<dbReference type="GeneID" id="913654"/>
<dbReference type="KEGG" id="ece:Z5928"/>
<dbReference type="KEGG" id="ecs:ECs_5287"/>
<dbReference type="PATRIC" id="fig|386585.9.peg.5528"/>
<dbReference type="eggNOG" id="COG0700">
    <property type="taxonomic scope" value="Bacteria"/>
</dbReference>
<dbReference type="HOGENOM" id="CLU_120911_0_0_6"/>
<dbReference type="OMA" id="FGICILN"/>
<dbReference type="Proteomes" id="UP000000558">
    <property type="component" value="Chromosome"/>
</dbReference>
<dbReference type="Proteomes" id="UP000002519">
    <property type="component" value="Chromosome"/>
</dbReference>
<dbReference type="GO" id="GO:0005886">
    <property type="term" value="C:plasma membrane"/>
    <property type="evidence" value="ECO:0007669"/>
    <property type="project" value="UniProtKB-SubCell"/>
</dbReference>
<dbReference type="InterPro" id="IPR011642">
    <property type="entry name" value="Gate_dom"/>
</dbReference>
<dbReference type="InterPro" id="IPR052549">
    <property type="entry name" value="SpmB"/>
</dbReference>
<dbReference type="NCBIfam" id="NF007811">
    <property type="entry name" value="PRK10519.1"/>
    <property type="match status" value="1"/>
</dbReference>
<dbReference type="PANTHER" id="PTHR35793">
    <property type="entry name" value="INNER MEMBRANE PROTEIN YJIG"/>
    <property type="match status" value="1"/>
</dbReference>
<dbReference type="PANTHER" id="PTHR35793:SF2">
    <property type="entry name" value="INNER MEMBRANE PROTEIN YJIG"/>
    <property type="match status" value="1"/>
</dbReference>
<dbReference type="Pfam" id="PF07670">
    <property type="entry name" value="Gate"/>
    <property type="match status" value="1"/>
</dbReference>
<proteinExistence type="inferred from homology"/>
<keyword id="KW-0997">Cell inner membrane</keyword>
<keyword id="KW-1003">Cell membrane</keyword>
<keyword id="KW-0472">Membrane</keyword>
<keyword id="KW-1185">Reference proteome</keyword>
<keyword id="KW-0812">Transmembrane</keyword>
<keyword id="KW-1133">Transmembrane helix</keyword>